<organism>
    <name type="scientific">Herminiimonas arsenicoxydans</name>
    <dbReference type="NCBI Taxonomy" id="204773"/>
    <lineage>
        <taxon>Bacteria</taxon>
        <taxon>Pseudomonadati</taxon>
        <taxon>Pseudomonadota</taxon>
        <taxon>Betaproteobacteria</taxon>
        <taxon>Burkholderiales</taxon>
        <taxon>Oxalobacteraceae</taxon>
        <taxon>Herminiimonas</taxon>
    </lineage>
</organism>
<proteinExistence type="inferred from homology"/>
<protein>
    <recommendedName>
        <fullName evidence="1">Aspartyl/glutamyl-tRNA(Asn/Gln) amidotransferase subunit C</fullName>
        <shortName evidence="1">Asp/Glu-ADT subunit C</shortName>
        <ecNumber evidence="1">6.3.5.-</ecNumber>
    </recommendedName>
</protein>
<dbReference type="EC" id="6.3.5.-" evidence="1"/>
<dbReference type="EMBL" id="CU207211">
    <property type="protein sequence ID" value="CAL60402.1"/>
    <property type="molecule type" value="Genomic_DNA"/>
</dbReference>
<dbReference type="SMR" id="A4G1L5"/>
<dbReference type="STRING" id="204773.HEAR0167"/>
<dbReference type="KEGG" id="har:HEAR0167"/>
<dbReference type="eggNOG" id="COG0721">
    <property type="taxonomic scope" value="Bacteria"/>
</dbReference>
<dbReference type="HOGENOM" id="CLU_105899_2_2_4"/>
<dbReference type="OrthoDB" id="9794326at2"/>
<dbReference type="Proteomes" id="UP000006697">
    <property type="component" value="Chromosome"/>
</dbReference>
<dbReference type="GO" id="GO:0050566">
    <property type="term" value="F:asparaginyl-tRNA synthase (glutamine-hydrolyzing) activity"/>
    <property type="evidence" value="ECO:0007669"/>
    <property type="project" value="RHEA"/>
</dbReference>
<dbReference type="GO" id="GO:0005524">
    <property type="term" value="F:ATP binding"/>
    <property type="evidence" value="ECO:0007669"/>
    <property type="project" value="UniProtKB-KW"/>
</dbReference>
<dbReference type="GO" id="GO:0050567">
    <property type="term" value="F:glutaminyl-tRNA synthase (glutamine-hydrolyzing) activity"/>
    <property type="evidence" value="ECO:0007669"/>
    <property type="project" value="UniProtKB-UniRule"/>
</dbReference>
<dbReference type="GO" id="GO:0070681">
    <property type="term" value="P:glutaminyl-tRNAGln biosynthesis via transamidation"/>
    <property type="evidence" value="ECO:0007669"/>
    <property type="project" value="TreeGrafter"/>
</dbReference>
<dbReference type="GO" id="GO:0006450">
    <property type="term" value="P:regulation of translational fidelity"/>
    <property type="evidence" value="ECO:0007669"/>
    <property type="project" value="InterPro"/>
</dbReference>
<dbReference type="GO" id="GO:0006412">
    <property type="term" value="P:translation"/>
    <property type="evidence" value="ECO:0007669"/>
    <property type="project" value="UniProtKB-UniRule"/>
</dbReference>
<dbReference type="Gene3D" id="1.10.20.60">
    <property type="entry name" value="Glu-tRNAGln amidotransferase C subunit, N-terminal domain"/>
    <property type="match status" value="1"/>
</dbReference>
<dbReference type="HAMAP" id="MF_00122">
    <property type="entry name" value="GatC"/>
    <property type="match status" value="1"/>
</dbReference>
<dbReference type="InterPro" id="IPR036113">
    <property type="entry name" value="Asp/Glu-ADT_sf_sub_c"/>
</dbReference>
<dbReference type="InterPro" id="IPR003837">
    <property type="entry name" value="GatC"/>
</dbReference>
<dbReference type="NCBIfam" id="TIGR00135">
    <property type="entry name" value="gatC"/>
    <property type="match status" value="1"/>
</dbReference>
<dbReference type="PANTHER" id="PTHR15004">
    <property type="entry name" value="GLUTAMYL-TRNA(GLN) AMIDOTRANSFERASE SUBUNIT C, MITOCHONDRIAL"/>
    <property type="match status" value="1"/>
</dbReference>
<dbReference type="PANTHER" id="PTHR15004:SF0">
    <property type="entry name" value="GLUTAMYL-TRNA(GLN) AMIDOTRANSFERASE SUBUNIT C, MITOCHONDRIAL"/>
    <property type="match status" value="1"/>
</dbReference>
<dbReference type="Pfam" id="PF02686">
    <property type="entry name" value="GatC"/>
    <property type="match status" value="1"/>
</dbReference>
<dbReference type="SUPFAM" id="SSF141000">
    <property type="entry name" value="Glu-tRNAGln amidotransferase C subunit"/>
    <property type="match status" value="1"/>
</dbReference>
<accession>A4G1L5</accession>
<name>GATC_HERAR</name>
<feature type="chain" id="PRO_1000016129" description="Aspartyl/glutamyl-tRNA(Asn/Gln) amidotransferase subunit C">
    <location>
        <begin position="1"/>
        <end position="100"/>
    </location>
</feature>
<sequence length="100" mass="10926">MSLALSDVKRLSMLAQIDLTDAQSAQTLDKLNGIFALVEQLSAVDTTGVEPLNHPIAALLPDLSLRLRDDVVSEPNRRDDYQQVAPATQDGLYLVPKVIE</sequence>
<comment type="function">
    <text evidence="1">Allows the formation of correctly charged Asn-tRNA(Asn) or Gln-tRNA(Gln) through the transamidation of misacylated Asp-tRNA(Asn) or Glu-tRNA(Gln) in organisms which lack either or both of asparaginyl-tRNA or glutaminyl-tRNA synthetases. The reaction takes place in the presence of glutamine and ATP through an activated phospho-Asp-tRNA(Asn) or phospho-Glu-tRNA(Gln).</text>
</comment>
<comment type="catalytic activity">
    <reaction evidence="1">
        <text>L-glutamyl-tRNA(Gln) + L-glutamine + ATP + H2O = L-glutaminyl-tRNA(Gln) + L-glutamate + ADP + phosphate + H(+)</text>
        <dbReference type="Rhea" id="RHEA:17521"/>
        <dbReference type="Rhea" id="RHEA-COMP:9681"/>
        <dbReference type="Rhea" id="RHEA-COMP:9684"/>
        <dbReference type="ChEBI" id="CHEBI:15377"/>
        <dbReference type="ChEBI" id="CHEBI:15378"/>
        <dbReference type="ChEBI" id="CHEBI:29985"/>
        <dbReference type="ChEBI" id="CHEBI:30616"/>
        <dbReference type="ChEBI" id="CHEBI:43474"/>
        <dbReference type="ChEBI" id="CHEBI:58359"/>
        <dbReference type="ChEBI" id="CHEBI:78520"/>
        <dbReference type="ChEBI" id="CHEBI:78521"/>
        <dbReference type="ChEBI" id="CHEBI:456216"/>
    </reaction>
</comment>
<comment type="catalytic activity">
    <reaction evidence="1">
        <text>L-aspartyl-tRNA(Asn) + L-glutamine + ATP + H2O = L-asparaginyl-tRNA(Asn) + L-glutamate + ADP + phosphate + 2 H(+)</text>
        <dbReference type="Rhea" id="RHEA:14513"/>
        <dbReference type="Rhea" id="RHEA-COMP:9674"/>
        <dbReference type="Rhea" id="RHEA-COMP:9677"/>
        <dbReference type="ChEBI" id="CHEBI:15377"/>
        <dbReference type="ChEBI" id="CHEBI:15378"/>
        <dbReference type="ChEBI" id="CHEBI:29985"/>
        <dbReference type="ChEBI" id="CHEBI:30616"/>
        <dbReference type="ChEBI" id="CHEBI:43474"/>
        <dbReference type="ChEBI" id="CHEBI:58359"/>
        <dbReference type="ChEBI" id="CHEBI:78515"/>
        <dbReference type="ChEBI" id="CHEBI:78516"/>
        <dbReference type="ChEBI" id="CHEBI:456216"/>
    </reaction>
</comment>
<comment type="subunit">
    <text evidence="1">Heterotrimer of A, B and C subunits.</text>
</comment>
<comment type="similarity">
    <text evidence="1">Belongs to the GatC family.</text>
</comment>
<evidence type="ECO:0000255" key="1">
    <source>
        <dbReference type="HAMAP-Rule" id="MF_00122"/>
    </source>
</evidence>
<reference key="1">
    <citation type="journal article" date="2007" name="PLoS Genet.">
        <title>A tale of two oxidation states: bacterial colonization of arsenic-rich environments.</title>
        <authorList>
            <person name="Muller D."/>
            <person name="Medigue C."/>
            <person name="Koechler S."/>
            <person name="Barbe V."/>
            <person name="Barakat M."/>
            <person name="Talla E."/>
            <person name="Bonnefoy V."/>
            <person name="Krin E."/>
            <person name="Arsene-Ploetze F."/>
            <person name="Carapito C."/>
            <person name="Chandler M."/>
            <person name="Cournoyer B."/>
            <person name="Cruveiller S."/>
            <person name="Dossat C."/>
            <person name="Duval S."/>
            <person name="Heymann M."/>
            <person name="Leize E."/>
            <person name="Lieutaud A."/>
            <person name="Lievremont D."/>
            <person name="Makita Y."/>
            <person name="Mangenot S."/>
            <person name="Nitschke W."/>
            <person name="Ortet P."/>
            <person name="Perdrial N."/>
            <person name="Schoepp B."/>
            <person name="Siguier P."/>
            <person name="Simeonova D.D."/>
            <person name="Rouy Z."/>
            <person name="Segurens B."/>
            <person name="Turlin E."/>
            <person name="Vallenet D."/>
            <person name="van Dorsselaer A."/>
            <person name="Weiss S."/>
            <person name="Weissenbach J."/>
            <person name="Lett M.-C."/>
            <person name="Danchin A."/>
            <person name="Bertin P.N."/>
        </authorList>
    </citation>
    <scope>NUCLEOTIDE SEQUENCE [LARGE SCALE GENOMIC DNA]</scope>
    <source>
        <strain>ULPAs1</strain>
    </source>
</reference>
<keyword id="KW-0067">ATP-binding</keyword>
<keyword id="KW-0436">Ligase</keyword>
<keyword id="KW-0547">Nucleotide-binding</keyword>
<keyword id="KW-0648">Protein biosynthesis</keyword>
<keyword id="KW-1185">Reference proteome</keyword>
<gene>
    <name evidence="1" type="primary">gatC</name>
    <name type="ordered locus">HEAR0167</name>
</gene>